<proteinExistence type="inferred from homology"/>
<dbReference type="EC" id="1.1.1.94" evidence="1"/>
<dbReference type="EMBL" id="CP000264">
    <property type="protein sequence ID" value="ABD56996.1"/>
    <property type="molecule type" value="Genomic_DNA"/>
</dbReference>
<dbReference type="RefSeq" id="WP_011457192.1">
    <property type="nucleotide sequence ID" value="NC_007802.1"/>
</dbReference>
<dbReference type="SMR" id="Q28JW6"/>
<dbReference type="STRING" id="290400.Jann_4079"/>
<dbReference type="KEGG" id="jan:Jann_4079"/>
<dbReference type="eggNOG" id="COG0240">
    <property type="taxonomic scope" value="Bacteria"/>
</dbReference>
<dbReference type="HOGENOM" id="CLU_033449_0_2_5"/>
<dbReference type="OrthoDB" id="9812273at2"/>
<dbReference type="UniPathway" id="UPA00940"/>
<dbReference type="Proteomes" id="UP000008326">
    <property type="component" value="Chromosome"/>
</dbReference>
<dbReference type="GO" id="GO:0005829">
    <property type="term" value="C:cytosol"/>
    <property type="evidence" value="ECO:0007669"/>
    <property type="project" value="TreeGrafter"/>
</dbReference>
<dbReference type="GO" id="GO:0047952">
    <property type="term" value="F:glycerol-3-phosphate dehydrogenase [NAD(P)+] activity"/>
    <property type="evidence" value="ECO:0007669"/>
    <property type="project" value="UniProtKB-UniRule"/>
</dbReference>
<dbReference type="GO" id="GO:0051287">
    <property type="term" value="F:NAD binding"/>
    <property type="evidence" value="ECO:0007669"/>
    <property type="project" value="InterPro"/>
</dbReference>
<dbReference type="GO" id="GO:0005975">
    <property type="term" value="P:carbohydrate metabolic process"/>
    <property type="evidence" value="ECO:0007669"/>
    <property type="project" value="InterPro"/>
</dbReference>
<dbReference type="GO" id="GO:0046167">
    <property type="term" value="P:glycerol-3-phosphate biosynthetic process"/>
    <property type="evidence" value="ECO:0007669"/>
    <property type="project" value="UniProtKB-UniRule"/>
</dbReference>
<dbReference type="GO" id="GO:0046168">
    <property type="term" value="P:glycerol-3-phosphate catabolic process"/>
    <property type="evidence" value="ECO:0007669"/>
    <property type="project" value="InterPro"/>
</dbReference>
<dbReference type="GO" id="GO:0006650">
    <property type="term" value="P:glycerophospholipid metabolic process"/>
    <property type="evidence" value="ECO:0007669"/>
    <property type="project" value="UniProtKB-UniRule"/>
</dbReference>
<dbReference type="GO" id="GO:0008654">
    <property type="term" value="P:phospholipid biosynthetic process"/>
    <property type="evidence" value="ECO:0007669"/>
    <property type="project" value="UniProtKB-KW"/>
</dbReference>
<dbReference type="Gene3D" id="1.10.1040.10">
    <property type="entry name" value="N-(1-d-carboxylethyl)-l-norvaline Dehydrogenase, domain 2"/>
    <property type="match status" value="1"/>
</dbReference>
<dbReference type="Gene3D" id="3.40.50.720">
    <property type="entry name" value="NAD(P)-binding Rossmann-like Domain"/>
    <property type="match status" value="1"/>
</dbReference>
<dbReference type="HAMAP" id="MF_00394">
    <property type="entry name" value="NAD_Glyc3P_dehydrog"/>
    <property type="match status" value="1"/>
</dbReference>
<dbReference type="InterPro" id="IPR008927">
    <property type="entry name" value="6-PGluconate_DH-like_C_sf"/>
</dbReference>
<dbReference type="InterPro" id="IPR013328">
    <property type="entry name" value="6PGD_dom2"/>
</dbReference>
<dbReference type="InterPro" id="IPR006168">
    <property type="entry name" value="G3P_DH_NAD-dep"/>
</dbReference>
<dbReference type="InterPro" id="IPR006109">
    <property type="entry name" value="G3P_DH_NAD-dep_C"/>
</dbReference>
<dbReference type="InterPro" id="IPR011128">
    <property type="entry name" value="G3P_DH_NAD-dep_N"/>
</dbReference>
<dbReference type="InterPro" id="IPR036291">
    <property type="entry name" value="NAD(P)-bd_dom_sf"/>
</dbReference>
<dbReference type="NCBIfam" id="NF000940">
    <property type="entry name" value="PRK00094.1-2"/>
    <property type="match status" value="1"/>
</dbReference>
<dbReference type="NCBIfam" id="NF000942">
    <property type="entry name" value="PRK00094.1-4"/>
    <property type="match status" value="1"/>
</dbReference>
<dbReference type="PANTHER" id="PTHR11728">
    <property type="entry name" value="GLYCEROL-3-PHOSPHATE DEHYDROGENASE"/>
    <property type="match status" value="1"/>
</dbReference>
<dbReference type="PANTHER" id="PTHR11728:SF1">
    <property type="entry name" value="GLYCEROL-3-PHOSPHATE DEHYDROGENASE [NAD(+)] 2, CHLOROPLASTIC"/>
    <property type="match status" value="1"/>
</dbReference>
<dbReference type="Pfam" id="PF07479">
    <property type="entry name" value="NAD_Gly3P_dh_C"/>
    <property type="match status" value="1"/>
</dbReference>
<dbReference type="Pfam" id="PF01210">
    <property type="entry name" value="NAD_Gly3P_dh_N"/>
    <property type="match status" value="1"/>
</dbReference>
<dbReference type="PIRSF" id="PIRSF000114">
    <property type="entry name" value="Glycerol-3-P_dh"/>
    <property type="match status" value="1"/>
</dbReference>
<dbReference type="PRINTS" id="PR00077">
    <property type="entry name" value="GPDHDRGNASE"/>
</dbReference>
<dbReference type="SUPFAM" id="SSF48179">
    <property type="entry name" value="6-phosphogluconate dehydrogenase C-terminal domain-like"/>
    <property type="match status" value="1"/>
</dbReference>
<dbReference type="SUPFAM" id="SSF51735">
    <property type="entry name" value="NAD(P)-binding Rossmann-fold domains"/>
    <property type="match status" value="1"/>
</dbReference>
<dbReference type="PROSITE" id="PS00957">
    <property type="entry name" value="NAD_G3PDH"/>
    <property type="match status" value="1"/>
</dbReference>
<feature type="chain" id="PRO_0000255321" description="Glycerol-3-phosphate dehydrogenase [NAD(P)+]">
    <location>
        <begin position="1"/>
        <end position="307"/>
    </location>
</feature>
<feature type="active site" description="Proton acceptor" evidence="1">
    <location>
        <position position="176"/>
    </location>
</feature>
<feature type="binding site" evidence="1">
    <location>
        <position position="11"/>
    </location>
    <ligand>
        <name>NADPH</name>
        <dbReference type="ChEBI" id="CHEBI:57783"/>
    </ligand>
</feature>
<feature type="binding site" evidence="1">
    <location>
        <position position="31"/>
    </location>
    <ligand>
        <name>NADPH</name>
        <dbReference type="ChEBI" id="CHEBI:57783"/>
    </ligand>
</feature>
<feature type="binding site" evidence="1">
    <location>
        <position position="95"/>
    </location>
    <ligand>
        <name>NADPH</name>
        <dbReference type="ChEBI" id="CHEBI:57783"/>
    </ligand>
</feature>
<feature type="binding site" evidence="1">
    <location>
        <position position="95"/>
    </location>
    <ligand>
        <name>sn-glycerol 3-phosphate</name>
        <dbReference type="ChEBI" id="CHEBI:57597"/>
    </ligand>
</feature>
<feature type="binding site" evidence="1">
    <location>
        <position position="121"/>
    </location>
    <ligand>
        <name>sn-glycerol 3-phosphate</name>
        <dbReference type="ChEBI" id="CHEBI:57597"/>
    </ligand>
</feature>
<feature type="binding site" evidence="1">
    <location>
        <position position="123"/>
    </location>
    <ligand>
        <name>sn-glycerol 3-phosphate</name>
        <dbReference type="ChEBI" id="CHEBI:57597"/>
    </ligand>
</feature>
<feature type="binding site" evidence="1">
    <location>
        <position position="125"/>
    </location>
    <ligand>
        <name>NADPH</name>
        <dbReference type="ChEBI" id="CHEBI:57783"/>
    </ligand>
</feature>
<feature type="binding site" evidence="1">
    <location>
        <position position="176"/>
    </location>
    <ligand>
        <name>sn-glycerol 3-phosphate</name>
        <dbReference type="ChEBI" id="CHEBI:57597"/>
    </ligand>
</feature>
<feature type="binding site" evidence="1">
    <location>
        <position position="229"/>
    </location>
    <ligand>
        <name>sn-glycerol 3-phosphate</name>
        <dbReference type="ChEBI" id="CHEBI:57597"/>
    </ligand>
</feature>
<feature type="binding site" evidence="1">
    <location>
        <position position="239"/>
    </location>
    <ligand>
        <name>sn-glycerol 3-phosphate</name>
        <dbReference type="ChEBI" id="CHEBI:57597"/>
    </ligand>
</feature>
<feature type="binding site" evidence="1">
    <location>
        <position position="240"/>
    </location>
    <ligand>
        <name>NADPH</name>
        <dbReference type="ChEBI" id="CHEBI:57783"/>
    </ligand>
</feature>
<feature type="binding site" evidence="1">
    <location>
        <position position="240"/>
    </location>
    <ligand>
        <name>sn-glycerol 3-phosphate</name>
        <dbReference type="ChEBI" id="CHEBI:57597"/>
    </ligand>
</feature>
<feature type="binding site" evidence="1">
    <location>
        <position position="241"/>
    </location>
    <ligand>
        <name>sn-glycerol 3-phosphate</name>
        <dbReference type="ChEBI" id="CHEBI:57597"/>
    </ligand>
</feature>
<feature type="binding site" evidence="1">
    <location>
        <position position="261"/>
    </location>
    <ligand>
        <name>NADPH</name>
        <dbReference type="ChEBI" id="CHEBI:57783"/>
    </ligand>
</feature>
<reference key="1">
    <citation type="submission" date="2006-02" db="EMBL/GenBank/DDBJ databases">
        <title>Complete sequence of chromosome of Jannaschia sp. CCS1.</title>
        <authorList>
            <consortium name="US DOE Joint Genome Institute"/>
            <person name="Copeland A."/>
            <person name="Lucas S."/>
            <person name="Lapidus A."/>
            <person name="Barry K."/>
            <person name="Detter J.C."/>
            <person name="Glavina del Rio T."/>
            <person name="Hammon N."/>
            <person name="Israni S."/>
            <person name="Pitluck S."/>
            <person name="Brettin T."/>
            <person name="Bruce D."/>
            <person name="Han C."/>
            <person name="Tapia R."/>
            <person name="Gilna P."/>
            <person name="Chertkov O."/>
            <person name="Saunders E."/>
            <person name="Schmutz J."/>
            <person name="Larimer F."/>
            <person name="Land M."/>
            <person name="Kyrpides N."/>
            <person name="Lykidis A."/>
            <person name="Moran M.A."/>
            <person name="Belas R."/>
            <person name="Ye W."/>
            <person name="Buchan A."/>
            <person name="Gonzalez J.M."/>
            <person name="Schell M.A."/>
            <person name="Richardson P."/>
        </authorList>
    </citation>
    <scope>NUCLEOTIDE SEQUENCE [LARGE SCALE GENOMIC DNA]</scope>
    <source>
        <strain>CCS1</strain>
    </source>
</reference>
<protein>
    <recommendedName>
        <fullName evidence="1">Glycerol-3-phosphate dehydrogenase [NAD(P)+]</fullName>
        <ecNumber evidence="1">1.1.1.94</ecNumber>
    </recommendedName>
    <alternativeName>
        <fullName evidence="1">NAD(P)(+)-dependent glycerol-3-phosphate dehydrogenase</fullName>
    </alternativeName>
    <alternativeName>
        <fullName evidence="1">NAD(P)H-dependent dihydroxyacetone-phosphate reductase</fullName>
    </alternativeName>
</protein>
<comment type="function">
    <text evidence="1">Catalyzes the reduction of the glycolytic intermediate dihydroxyacetone phosphate (DHAP) to sn-glycerol 3-phosphate (G3P), the key precursor for phospholipid synthesis.</text>
</comment>
<comment type="catalytic activity">
    <reaction evidence="1">
        <text>sn-glycerol 3-phosphate + NAD(+) = dihydroxyacetone phosphate + NADH + H(+)</text>
        <dbReference type="Rhea" id="RHEA:11092"/>
        <dbReference type="ChEBI" id="CHEBI:15378"/>
        <dbReference type="ChEBI" id="CHEBI:57540"/>
        <dbReference type="ChEBI" id="CHEBI:57597"/>
        <dbReference type="ChEBI" id="CHEBI:57642"/>
        <dbReference type="ChEBI" id="CHEBI:57945"/>
        <dbReference type="EC" id="1.1.1.94"/>
    </reaction>
    <physiologicalReaction direction="right-to-left" evidence="1">
        <dbReference type="Rhea" id="RHEA:11094"/>
    </physiologicalReaction>
</comment>
<comment type="catalytic activity">
    <reaction evidence="1">
        <text>sn-glycerol 3-phosphate + NADP(+) = dihydroxyacetone phosphate + NADPH + H(+)</text>
        <dbReference type="Rhea" id="RHEA:11096"/>
        <dbReference type="ChEBI" id="CHEBI:15378"/>
        <dbReference type="ChEBI" id="CHEBI:57597"/>
        <dbReference type="ChEBI" id="CHEBI:57642"/>
        <dbReference type="ChEBI" id="CHEBI:57783"/>
        <dbReference type="ChEBI" id="CHEBI:58349"/>
        <dbReference type="EC" id="1.1.1.94"/>
    </reaction>
    <physiologicalReaction direction="right-to-left" evidence="1">
        <dbReference type="Rhea" id="RHEA:11098"/>
    </physiologicalReaction>
</comment>
<comment type="pathway">
    <text evidence="1">Membrane lipid metabolism; glycerophospholipid metabolism.</text>
</comment>
<comment type="subcellular location">
    <subcellularLocation>
        <location evidence="1">Cytoplasm</location>
    </subcellularLocation>
</comment>
<comment type="similarity">
    <text evidence="1">Belongs to the NAD-dependent glycerol-3-phosphate dehydrogenase family.</text>
</comment>
<name>GPDA_JANSC</name>
<keyword id="KW-0963">Cytoplasm</keyword>
<keyword id="KW-0444">Lipid biosynthesis</keyword>
<keyword id="KW-0443">Lipid metabolism</keyword>
<keyword id="KW-0520">NAD</keyword>
<keyword id="KW-0521">NADP</keyword>
<keyword id="KW-0547">Nucleotide-binding</keyword>
<keyword id="KW-0560">Oxidoreductase</keyword>
<keyword id="KW-0594">Phospholipid biosynthesis</keyword>
<keyword id="KW-1208">Phospholipid metabolism</keyword>
<keyword id="KW-1185">Reference proteome</keyword>
<organism>
    <name type="scientific">Jannaschia sp. (strain CCS1)</name>
    <dbReference type="NCBI Taxonomy" id="290400"/>
    <lineage>
        <taxon>Bacteria</taxon>
        <taxon>Pseudomonadati</taxon>
        <taxon>Pseudomonadota</taxon>
        <taxon>Alphaproteobacteria</taxon>
        <taxon>Rhodobacterales</taxon>
        <taxon>Roseobacteraceae</taxon>
        <taxon>Jannaschia</taxon>
    </lineage>
</organism>
<accession>Q28JW6</accession>
<sequence>MKLDVIGAGAFGAGLAIAYARAGLDVTLWARDVAGLRGGESPRLPGHAFPDGLHVTGDLSACTADVALIAIPTQSIAGFVAKGGLAPRVAVSCAKGIDRSSGHGPTALLAALAPCTAQLTGPSFAADIARGLPTALTIACADAAEGAALQNALSTPTLRLYTTQDVIGAELGGALKNVIAIAAGAVIGKGLGDSARAALIARGFAEMTRYATAKGALPETLTGLSGLGDLILTCGSAQSRNFRFGHALATGDRLPEGTTVEGLHTARQLAASPEDTPIADTVAALADGTLDIDGALSHLLSRPLKPE</sequence>
<gene>
    <name evidence="1" type="primary">gpsA</name>
    <name type="ordered locus">Jann_4079</name>
</gene>
<evidence type="ECO:0000255" key="1">
    <source>
        <dbReference type="HAMAP-Rule" id="MF_00394"/>
    </source>
</evidence>